<sequence length="445" mass="49831">MREIVHLQAGQCGNQIGAKFWEVISDEHGIDPTGTYHGDSDLQLERINVYYNEATGGKYVPRAVLVDLEPGTMDSVRSGPFGQIFRPDNFVFGQSGAGNNWAKGHYTEGAELVDSVLDVVRKEAESCDCLQGFQLTHSLGGGTGSGMGTLLISKIREEYPDRIMNTFSVVPSPKVSDTVVEPYNATLSVHQLVENTDETYCIDNEALYDICFRTLKLTTPTYGDLNHLVSATMSGVTTCLRFPGQLNADLRKLAVNMVPFPRLHFFMPGFAPLTSRGSQQYRALTVPELTQQMFDAKNMMAACDPRHGRYLTVAAVFRGRMSMKEVDEQMLNVQNKNSSYFVEWIPNNVKTAVCDIPPRGLKMSATFIGNSTAIQELFKRISEQFTAMFRRKAFLHWYTGEGMDEMEFTEAESNMNDLVSEYQQYQDATAEEEGEFEEEAEEEVA</sequence>
<dbReference type="EMBL" id="BC105181">
    <property type="protein sequence ID" value="AAI05182.1"/>
    <property type="molecule type" value="mRNA"/>
</dbReference>
<dbReference type="RefSeq" id="NP_001029835.1">
    <property type="nucleotide sequence ID" value="NM_001034663.2"/>
</dbReference>
<dbReference type="PDB" id="7RRO">
    <property type="method" value="EM"/>
    <property type="resolution" value="3.40 A"/>
    <property type="chains" value="AB/AD/AF/AH/AJ/AL/BB/BD/BF/BH/BJ/BL/CB/CD/CF/CH/CJ/CL/DB/DD/DF/DH/DJ/DL/DN/EB/ED/EF/EH/EJ=1-445"/>
</dbReference>
<dbReference type="PDB" id="8OTZ">
    <property type="method" value="EM"/>
    <property type="resolution" value="3.60 A"/>
    <property type="chains" value="AB/AD/AF/AH/AJ/AL/BB/BD/BF/BH/BJ/BL/CB/CD/CF/CH/CJ/CL/DB/DD/DF/DH/DJ/DL/DN/EB/ED/EF/EH/EJ=1-445"/>
</dbReference>
<dbReference type="PDB" id="8OU0">
    <property type="method" value="EM"/>
    <property type="resolution" value="3.50 A"/>
    <property type="chains" value="B=1-445"/>
</dbReference>
<dbReference type="PDB" id="9CPB">
    <property type="method" value="EM"/>
    <property type="resolution" value="3.52 A"/>
    <property type="chains" value="AB/AD/AF/AH/AJ/AL/BB/BD/BF/BH/BJ/BL/CB/CD/CF/CH/CJ/CL/DB/DD/DF/DH/DJ/DL/ED/EF/EH/EJ/EL/FD=1-445"/>
</dbReference>
<dbReference type="PDBsum" id="7RRO"/>
<dbReference type="PDBsum" id="8OTZ"/>
<dbReference type="PDBsum" id="8OU0"/>
<dbReference type="PDBsum" id="9CPB"/>
<dbReference type="EMDB" id="EMD-17187"/>
<dbReference type="EMDB" id="EMD-17188"/>
<dbReference type="EMDB" id="EMD-24664"/>
<dbReference type="EMDB" id="EMD-45801"/>
<dbReference type="EMDB" id="EMD-50664"/>
<dbReference type="SMR" id="Q3MHM5"/>
<dbReference type="FunCoup" id="Q3MHM5">
    <property type="interactions" value="1438"/>
</dbReference>
<dbReference type="STRING" id="9913.ENSBTAP00000064454"/>
<dbReference type="iPTMnet" id="Q3MHM5"/>
<dbReference type="SwissPalm" id="Q3MHM5"/>
<dbReference type="PaxDb" id="9913-ENSBTAP00000008372"/>
<dbReference type="PeptideAtlas" id="Q3MHM5"/>
<dbReference type="Ensembl" id="ENSBTAT00000008372.5">
    <property type="protein sequence ID" value="ENSBTAP00000008372.5"/>
    <property type="gene ID" value="ENSBTAG00000048426.2"/>
</dbReference>
<dbReference type="GeneID" id="539149"/>
<dbReference type="KEGG" id="bta:539149"/>
<dbReference type="CTD" id="10383"/>
<dbReference type="VEuPathDB" id="HostDB:ENSBTAG00000052518"/>
<dbReference type="eggNOG" id="KOG1375">
    <property type="taxonomic scope" value="Eukaryota"/>
</dbReference>
<dbReference type="GeneTree" id="ENSGT00940000154394"/>
<dbReference type="HOGENOM" id="CLU_015718_1_1_1"/>
<dbReference type="InParanoid" id="Q3MHM5"/>
<dbReference type="OMA" id="WVPRSVN"/>
<dbReference type="OrthoDB" id="9820704at2759"/>
<dbReference type="TreeFam" id="TF300298"/>
<dbReference type="Reactome" id="R-BTA-190840">
    <property type="pathway name" value="Microtubule-dependent trafficking of connexons from Golgi to the plasma membrane"/>
</dbReference>
<dbReference type="Reactome" id="R-BTA-2132295">
    <property type="pathway name" value="MHC class II antigen presentation"/>
</dbReference>
<dbReference type="Reactome" id="R-BTA-2467813">
    <property type="pathway name" value="Separation of Sister Chromatids"/>
</dbReference>
<dbReference type="Reactome" id="R-BTA-2500257">
    <property type="pathway name" value="Resolution of Sister Chromatid Cohesion"/>
</dbReference>
<dbReference type="Reactome" id="R-BTA-2565942">
    <property type="pathway name" value="Regulation of PLK1 Activity at G2/M Transition"/>
</dbReference>
<dbReference type="Reactome" id="R-BTA-3371497">
    <property type="pathway name" value="HSP90 chaperone cycle for steroid hormone receptors (SHR) in the presence of ligand"/>
</dbReference>
<dbReference type="Reactome" id="R-BTA-380259">
    <property type="pathway name" value="Loss of Nlp from mitotic centrosomes"/>
</dbReference>
<dbReference type="Reactome" id="R-BTA-380270">
    <property type="pathway name" value="Recruitment of mitotic centrosome proteins and complexes"/>
</dbReference>
<dbReference type="Reactome" id="R-BTA-380284">
    <property type="pathway name" value="Loss of proteins required for interphase microtubule organization from the centrosome"/>
</dbReference>
<dbReference type="Reactome" id="R-BTA-380320">
    <property type="pathway name" value="Recruitment of NuMA to mitotic centrosomes"/>
</dbReference>
<dbReference type="Reactome" id="R-BTA-5610787">
    <property type="pathway name" value="Hedgehog 'off' state"/>
</dbReference>
<dbReference type="Reactome" id="R-BTA-5617833">
    <property type="pathway name" value="Cilium Assembly"/>
</dbReference>
<dbReference type="Reactome" id="R-BTA-5620912">
    <property type="pathway name" value="Anchoring of the basal body to the plasma membrane"/>
</dbReference>
<dbReference type="Reactome" id="R-BTA-5620924">
    <property type="pathway name" value="Intraflagellar transport"/>
</dbReference>
<dbReference type="Reactome" id="R-BTA-5626467">
    <property type="pathway name" value="RHO GTPases activate IQGAPs"/>
</dbReference>
<dbReference type="Reactome" id="R-BTA-5663220">
    <property type="pathway name" value="RHO GTPases Activate Formins"/>
</dbReference>
<dbReference type="Reactome" id="R-BTA-6798695">
    <property type="pathway name" value="Neutrophil degranulation"/>
</dbReference>
<dbReference type="Reactome" id="R-BTA-6807878">
    <property type="pathway name" value="COPI-mediated anterograde transport"/>
</dbReference>
<dbReference type="Reactome" id="R-BTA-6811434">
    <property type="pathway name" value="COPI-dependent Golgi-to-ER retrograde traffic"/>
</dbReference>
<dbReference type="Reactome" id="R-BTA-6811436">
    <property type="pathway name" value="COPI-independent Golgi-to-ER retrograde traffic"/>
</dbReference>
<dbReference type="Reactome" id="R-BTA-68877">
    <property type="pathway name" value="Mitotic Prometaphase"/>
</dbReference>
<dbReference type="Reactome" id="R-BTA-8852276">
    <property type="pathway name" value="The role of GTSE1 in G2/M progression after G2 checkpoint"/>
</dbReference>
<dbReference type="Reactome" id="R-BTA-8854518">
    <property type="pathway name" value="AURKA Activation by TPX2"/>
</dbReference>
<dbReference type="Reactome" id="R-BTA-8955332">
    <property type="pathway name" value="Carboxyterminal post-translational modifications of tubulin"/>
</dbReference>
<dbReference type="Reactome" id="R-BTA-9646399">
    <property type="pathway name" value="Aggrephagy"/>
</dbReference>
<dbReference type="Reactome" id="R-BTA-9648025">
    <property type="pathway name" value="EML4 and NUDC in mitotic spindle formation"/>
</dbReference>
<dbReference type="Reactome" id="R-BTA-9668328">
    <property type="pathway name" value="Sealing of the nuclear envelope (NE) by ESCRT-III"/>
</dbReference>
<dbReference type="Reactome" id="R-BTA-983189">
    <property type="pathway name" value="Kinesins"/>
</dbReference>
<dbReference type="Proteomes" id="UP000009136">
    <property type="component" value="Chromosome 11"/>
</dbReference>
<dbReference type="Bgee" id="ENSBTAG00000052518">
    <property type="expression patterns" value="Expressed in retina and 108 other cell types or tissues"/>
</dbReference>
<dbReference type="GO" id="GO:0005879">
    <property type="term" value="C:axonemal microtubule"/>
    <property type="evidence" value="ECO:0007669"/>
    <property type="project" value="Ensembl"/>
</dbReference>
<dbReference type="GO" id="GO:0005737">
    <property type="term" value="C:cytoplasm"/>
    <property type="evidence" value="ECO:0000318"/>
    <property type="project" value="GO_Central"/>
</dbReference>
<dbReference type="GO" id="GO:0045171">
    <property type="term" value="C:intercellular bridge"/>
    <property type="evidence" value="ECO:0007669"/>
    <property type="project" value="Ensembl"/>
</dbReference>
<dbReference type="GO" id="GO:0005874">
    <property type="term" value="C:microtubule"/>
    <property type="evidence" value="ECO:0000318"/>
    <property type="project" value="GO_Central"/>
</dbReference>
<dbReference type="GO" id="GO:0072686">
    <property type="term" value="C:mitotic spindle"/>
    <property type="evidence" value="ECO:0007669"/>
    <property type="project" value="Ensembl"/>
</dbReference>
<dbReference type="GO" id="GO:0036126">
    <property type="term" value="C:sperm flagellum"/>
    <property type="evidence" value="ECO:0007669"/>
    <property type="project" value="Ensembl"/>
</dbReference>
<dbReference type="GO" id="GO:0003725">
    <property type="term" value="F:double-stranded RNA binding"/>
    <property type="evidence" value="ECO:0007669"/>
    <property type="project" value="Ensembl"/>
</dbReference>
<dbReference type="GO" id="GO:0005525">
    <property type="term" value="F:GTP binding"/>
    <property type="evidence" value="ECO:0000318"/>
    <property type="project" value="GO_Central"/>
</dbReference>
<dbReference type="GO" id="GO:0003924">
    <property type="term" value="F:GTPase activity"/>
    <property type="evidence" value="ECO:0007669"/>
    <property type="project" value="InterPro"/>
</dbReference>
<dbReference type="GO" id="GO:0046872">
    <property type="term" value="F:metal ion binding"/>
    <property type="evidence" value="ECO:0007669"/>
    <property type="project" value="UniProtKB-KW"/>
</dbReference>
<dbReference type="GO" id="GO:0005200">
    <property type="term" value="F:structural constituent of cytoskeleton"/>
    <property type="evidence" value="ECO:0000318"/>
    <property type="project" value="GO_Central"/>
</dbReference>
<dbReference type="GO" id="GO:0030317">
    <property type="term" value="P:flagellated sperm motility"/>
    <property type="evidence" value="ECO:0007669"/>
    <property type="project" value="Ensembl"/>
</dbReference>
<dbReference type="GO" id="GO:0000226">
    <property type="term" value="P:microtubule cytoskeleton organization"/>
    <property type="evidence" value="ECO:0000318"/>
    <property type="project" value="GO_Central"/>
</dbReference>
<dbReference type="GO" id="GO:0000278">
    <property type="term" value="P:mitotic cell cycle"/>
    <property type="evidence" value="ECO:0000318"/>
    <property type="project" value="GO_Central"/>
</dbReference>
<dbReference type="CDD" id="cd02187">
    <property type="entry name" value="beta_tubulin"/>
    <property type="match status" value="1"/>
</dbReference>
<dbReference type="FunFam" id="1.10.287.600:FF:000006">
    <property type="entry name" value="Tubulin beta chain"/>
    <property type="match status" value="1"/>
</dbReference>
<dbReference type="FunFam" id="3.30.1330.20:FF:000002">
    <property type="entry name" value="Tubulin beta chain"/>
    <property type="match status" value="1"/>
</dbReference>
<dbReference type="FunFam" id="3.40.50.1440:FF:000003">
    <property type="entry name" value="Tubulin beta chain"/>
    <property type="match status" value="1"/>
</dbReference>
<dbReference type="Gene3D" id="1.10.287.600">
    <property type="entry name" value="Helix hairpin bin"/>
    <property type="match status" value="1"/>
</dbReference>
<dbReference type="Gene3D" id="3.30.1330.20">
    <property type="entry name" value="Tubulin/FtsZ, C-terminal domain"/>
    <property type="match status" value="1"/>
</dbReference>
<dbReference type="Gene3D" id="3.40.50.1440">
    <property type="entry name" value="Tubulin/FtsZ, GTPase domain"/>
    <property type="match status" value="1"/>
</dbReference>
<dbReference type="InterPro" id="IPR013838">
    <property type="entry name" value="Beta-tubulin_BS"/>
</dbReference>
<dbReference type="InterPro" id="IPR002453">
    <property type="entry name" value="Beta_tubulin"/>
</dbReference>
<dbReference type="InterPro" id="IPR008280">
    <property type="entry name" value="Tub_FtsZ_C"/>
</dbReference>
<dbReference type="InterPro" id="IPR000217">
    <property type="entry name" value="Tubulin"/>
</dbReference>
<dbReference type="InterPro" id="IPR037103">
    <property type="entry name" value="Tubulin/FtsZ-like_C"/>
</dbReference>
<dbReference type="InterPro" id="IPR018316">
    <property type="entry name" value="Tubulin/FtsZ_2-layer-sand-dom"/>
</dbReference>
<dbReference type="InterPro" id="IPR036525">
    <property type="entry name" value="Tubulin/FtsZ_GTPase_sf"/>
</dbReference>
<dbReference type="InterPro" id="IPR023123">
    <property type="entry name" value="Tubulin_C"/>
</dbReference>
<dbReference type="InterPro" id="IPR017975">
    <property type="entry name" value="Tubulin_CS"/>
</dbReference>
<dbReference type="InterPro" id="IPR003008">
    <property type="entry name" value="Tubulin_FtsZ_GTPase"/>
</dbReference>
<dbReference type="PANTHER" id="PTHR11588">
    <property type="entry name" value="TUBULIN"/>
    <property type="match status" value="1"/>
</dbReference>
<dbReference type="Pfam" id="PF00091">
    <property type="entry name" value="Tubulin"/>
    <property type="match status" value="1"/>
</dbReference>
<dbReference type="Pfam" id="PF03953">
    <property type="entry name" value="Tubulin_C"/>
    <property type="match status" value="1"/>
</dbReference>
<dbReference type="PRINTS" id="PR01163">
    <property type="entry name" value="BETATUBULIN"/>
</dbReference>
<dbReference type="PRINTS" id="PR01161">
    <property type="entry name" value="TUBULIN"/>
</dbReference>
<dbReference type="SMART" id="SM00864">
    <property type="entry name" value="Tubulin"/>
    <property type="match status" value="1"/>
</dbReference>
<dbReference type="SMART" id="SM00865">
    <property type="entry name" value="Tubulin_C"/>
    <property type="match status" value="1"/>
</dbReference>
<dbReference type="SUPFAM" id="SSF55307">
    <property type="entry name" value="Tubulin C-terminal domain-like"/>
    <property type="match status" value="1"/>
</dbReference>
<dbReference type="SUPFAM" id="SSF52490">
    <property type="entry name" value="Tubulin nucleotide-binding domain-like"/>
    <property type="match status" value="1"/>
</dbReference>
<dbReference type="PROSITE" id="PS00227">
    <property type="entry name" value="TUBULIN"/>
    <property type="match status" value="1"/>
</dbReference>
<dbReference type="PROSITE" id="PS00228">
    <property type="entry name" value="TUBULIN_B_AUTOREG"/>
    <property type="match status" value="1"/>
</dbReference>
<comment type="function">
    <text evidence="9 11 12">Tubulin is the major constituent of microtubules, a cylinder consisting of laterally associated linear protofilaments composed of alpha- and beta-tubulin heterodimers (PubMed:2207090, PubMed:6504138, PubMed:7704569). Microtubules grow by the addition of GTP-tubulin dimers to the microtubule end, where a stabilizing cap forms. Below the cap, tubulin dimers are in GDP-bound state, owing to GTPase activity of alpha-tubulin (PubMed:2207090, PubMed:6504138, PubMed:7704569).</text>
</comment>
<comment type="cofactor">
    <cofactor evidence="2">
        <name>Mg(2+)</name>
        <dbReference type="ChEBI" id="CHEBI:18420"/>
    </cofactor>
</comment>
<comment type="subunit">
    <text evidence="9 10 11 12">Dimer of alpha and beta chains (PubMed:2207090, PubMed:6504138, PubMed:7704569). A typical microtubule is a hollow water-filled tube with an outer diameter of 25 nm and an inner diameter of 15 nM. Alpha-beta heterodimers associate head-to-tail to form protofilaments running lengthwise along the microtubule wall with the beta-tubulin subunit facing the microtubule plus end conferring a structural polarity. Microtubules usually have 13 protofilaments but different protofilament numbers can be found in some organisms and specialized cells (PubMed:2207090, PubMed:6504138, PubMed:7704569). Component of sperm flagellar doublet microtubules (PubMed:37327785).</text>
</comment>
<comment type="subcellular location">
    <subcellularLocation>
        <location evidence="9 11 12">Cytoplasm</location>
        <location evidence="9 11 12">Cytoskeleton</location>
    </subcellularLocation>
    <subcellularLocation>
        <location evidence="10">Cytoplasm</location>
        <location evidence="10">Cytoskeleton</location>
        <location evidence="10">Flagellum axoneme</location>
    </subcellularLocation>
</comment>
<comment type="domain">
    <text>The highly acidic C-terminal region may bind cations such as calcium.</text>
</comment>
<comment type="domain">
    <text evidence="1">The MREI motif is common among all beta-tubulin isoforms and may be critical for tubulin autoregulation.</text>
</comment>
<comment type="PTM">
    <text evidence="4">Some glutamate residues at the C-terminus are polyglycylated, resulting in polyglycine chains on the gamma-carboxyl group. Glycylation is mainly limited to tubulin incorporated into axonemes (cilia and flagella) whereas glutamylation is prevalent in neuronal cells, centrioles, axonemes, and the mitotic spindle. Both modifications can coexist on the same protein on adjacent residues, and lowering polyglycylation levels increases polyglutamylation, and reciprocally. Cilia and flagella glycylation is required for their stability and maintenance. Flagella glycylation controls sperm motility.</text>
</comment>
<comment type="PTM">
    <text evidence="4 7">Some glutamate residues at the C-terminus are polyglutamylated, resulting in polyglutamate chains on the gamma-carboxyl group (By similarity). Polyglutamylation plays a key role in microtubule severing by spastin (SPAST). SPAST preferentially recognizes and acts on microtubules decorated with short polyglutamate tails: severing activity by SPAST increases as the number of glutamates per tubulin rises from one to eight, but decreases beyond this glutamylation threshold (By similarity). Glutamylation is also involved in cilia motility (By similarity).</text>
</comment>
<comment type="PTM">
    <text evidence="3">Phosphorylated on Ser-172 by CDK1 during the cell cycle, from metaphase to telophase, but not in interphase. This phosphorylation inhibits tubulin incorporation into microtubules.</text>
</comment>
<comment type="similarity">
    <text evidence="13">Belongs to the tubulin family.</text>
</comment>
<organism>
    <name type="scientific">Bos taurus</name>
    <name type="common">Bovine</name>
    <dbReference type="NCBI Taxonomy" id="9913"/>
    <lineage>
        <taxon>Eukaryota</taxon>
        <taxon>Metazoa</taxon>
        <taxon>Chordata</taxon>
        <taxon>Craniata</taxon>
        <taxon>Vertebrata</taxon>
        <taxon>Euteleostomi</taxon>
        <taxon>Mammalia</taxon>
        <taxon>Eutheria</taxon>
        <taxon>Laurasiatheria</taxon>
        <taxon>Artiodactyla</taxon>
        <taxon>Ruminantia</taxon>
        <taxon>Pecora</taxon>
        <taxon>Bovidae</taxon>
        <taxon>Bovinae</taxon>
        <taxon>Bos</taxon>
    </lineage>
</organism>
<accession>Q3MHM5</accession>
<protein>
    <recommendedName>
        <fullName>Tubulin beta-4B chain</fullName>
    </recommendedName>
    <alternativeName>
        <fullName>Tubulin beta-2C chain</fullName>
    </alternativeName>
</protein>
<gene>
    <name type="primary">TUBB4B</name>
    <name type="synonym">TUBB2C</name>
</gene>
<evidence type="ECO:0000250" key="1">
    <source>
        <dbReference type="UniProtKB" id="P07437"/>
    </source>
</evidence>
<evidence type="ECO:0000250" key="2">
    <source>
        <dbReference type="UniProtKB" id="P68363"/>
    </source>
</evidence>
<evidence type="ECO:0000250" key="3">
    <source>
        <dbReference type="UniProtKB" id="P68371"/>
    </source>
</evidence>
<evidence type="ECO:0000250" key="4">
    <source>
        <dbReference type="UniProtKB" id="P68372"/>
    </source>
</evidence>
<evidence type="ECO:0000250" key="5">
    <source>
        <dbReference type="UniProtKB" id="Q13509"/>
    </source>
</evidence>
<evidence type="ECO:0000250" key="6">
    <source>
        <dbReference type="UniProtKB" id="Q2T9S0"/>
    </source>
</evidence>
<evidence type="ECO:0000250" key="7">
    <source>
        <dbReference type="UniProtKB" id="Q71U36"/>
    </source>
</evidence>
<evidence type="ECO:0000256" key="8">
    <source>
        <dbReference type="SAM" id="MobiDB-lite"/>
    </source>
</evidence>
<evidence type="ECO:0000269" key="9">
    <source>
    </source>
</evidence>
<evidence type="ECO:0000269" key="10">
    <source>
    </source>
</evidence>
<evidence type="ECO:0000269" key="11">
    <source>
    </source>
</evidence>
<evidence type="ECO:0000269" key="12">
    <source>
    </source>
</evidence>
<evidence type="ECO:0000305" key="13"/>
<evidence type="ECO:0007744" key="14">
    <source>
        <dbReference type="PDB" id="8OTZ"/>
    </source>
</evidence>
<evidence type="ECO:0007829" key="15">
    <source>
        <dbReference type="PDB" id="8OU0"/>
    </source>
</evidence>
<reference key="1">
    <citation type="submission" date="2005-09" db="EMBL/GenBank/DDBJ databases">
        <authorList>
            <consortium name="NIH - Mammalian Gene Collection (MGC) project"/>
        </authorList>
    </citation>
    <scope>NUCLEOTIDE SEQUENCE [LARGE SCALE MRNA]</scope>
    <source>
        <strain>Crossbred X Angus</strain>
        <tissue>Ileum</tissue>
    </source>
</reference>
<reference key="2">
    <citation type="journal article" date="1984" name="Nature">
        <title>Dynamic instability of microtubule growth.</title>
        <authorList>
            <person name="Mitchison T."/>
            <person name="Kirschner M."/>
        </authorList>
    </citation>
    <scope>FUNCTION</scope>
    <scope>SUBUNIT</scope>
    <scope>SUBCELLULAR LOCATION</scope>
</reference>
<reference key="3">
    <citation type="journal article" date="1990" name="Biochemistry">
        <title>Role of GTP hydrolysis in microtubule polymerization: evidence for a coupled hydrolysis mechanism.</title>
        <authorList>
            <person name="Stewart R.J."/>
            <person name="Farrell K.W."/>
            <person name="Wilson L."/>
        </authorList>
    </citation>
    <scope>FUNCTION</scope>
    <scope>SUBUNIT</scope>
    <scope>SUBCELLULAR LOCATION</scope>
</reference>
<reference key="4">
    <citation type="journal article" date="1994" name="Curr. Biol.">
        <title>The minimum GTP cap required to stabilize microtubules.</title>
        <authorList>
            <person name="Drechsel D.N."/>
            <person name="Kirschner M.W."/>
        </authorList>
    </citation>
    <scope>FUNCTION</scope>
    <scope>SUBUNIT</scope>
    <scope>SUBCELLULAR LOCATION</scope>
</reference>
<reference evidence="14" key="5">
    <citation type="journal article" date="2023" name="Cell">
        <title>Structural specializations of the sperm tail.</title>
        <authorList>
            <person name="Leung M.R."/>
            <person name="Zeng J."/>
            <person name="Wang X."/>
            <person name="Roelofs M.C."/>
            <person name="Huang W."/>
            <person name="Zenezini Chiozzi R."/>
            <person name="Hevler J.F."/>
            <person name="Heck A.J.R."/>
            <person name="Dutcher S.K."/>
            <person name="Brown A."/>
            <person name="Zhang R."/>
            <person name="Zeev-Ben-Mordehai T."/>
        </authorList>
    </citation>
    <scope>STRUCTURE BY ELECTRON MICROSCOPY (3.60 ANGSTROMS)</scope>
    <scope>SUBUNIT</scope>
    <scope>SUBCELLULAR LOCATION</scope>
</reference>
<keyword id="KW-0002">3D-structure</keyword>
<keyword id="KW-0007">Acetylation</keyword>
<keyword id="KW-0966">Cell projection</keyword>
<keyword id="KW-0969">Cilium</keyword>
<keyword id="KW-0963">Cytoplasm</keyword>
<keyword id="KW-0206">Cytoskeleton</keyword>
<keyword id="KW-0282">Flagellum</keyword>
<keyword id="KW-0342">GTP-binding</keyword>
<keyword id="KW-1017">Isopeptide bond</keyword>
<keyword id="KW-0460">Magnesium</keyword>
<keyword id="KW-0479">Metal-binding</keyword>
<keyword id="KW-0493">Microtubule</keyword>
<keyword id="KW-0547">Nucleotide-binding</keyword>
<keyword id="KW-0597">Phosphoprotein</keyword>
<keyword id="KW-1185">Reference proteome</keyword>
<proteinExistence type="evidence at protein level"/>
<name>TBB4B_BOVIN</name>
<feature type="chain" id="PRO_0000233028" description="Tubulin beta-4B chain">
    <location>
        <begin position="1"/>
        <end position="445"/>
    </location>
</feature>
<feature type="region of interest" description="Disordered" evidence="8">
    <location>
        <begin position="426"/>
        <end position="445"/>
    </location>
</feature>
<feature type="short sequence motif" description="MREI motif" evidence="1">
    <location>
        <begin position="1"/>
        <end position="4"/>
    </location>
</feature>
<feature type="compositionally biased region" description="Acidic residues" evidence="8">
    <location>
        <begin position="429"/>
        <end position="445"/>
    </location>
</feature>
<feature type="binding site" evidence="5">
    <location>
        <position position="11"/>
    </location>
    <ligand>
        <name>GTP</name>
        <dbReference type="ChEBI" id="CHEBI:37565"/>
    </ligand>
</feature>
<feature type="binding site" evidence="2">
    <location>
        <position position="69"/>
    </location>
    <ligand>
        <name>GTP</name>
        <dbReference type="ChEBI" id="CHEBI:37565"/>
    </ligand>
</feature>
<feature type="binding site" evidence="2">
    <location>
        <position position="69"/>
    </location>
    <ligand>
        <name>Mg(2+)</name>
        <dbReference type="ChEBI" id="CHEBI:18420"/>
    </ligand>
</feature>
<feature type="binding site" evidence="5">
    <location>
        <position position="138"/>
    </location>
    <ligand>
        <name>GTP</name>
        <dbReference type="ChEBI" id="CHEBI:37565"/>
    </ligand>
</feature>
<feature type="binding site" evidence="5">
    <location>
        <position position="142"/>
    </location>
    <ligand>
        <name>GTP</name>
        <dbReference type="ChEBI" id="CHEBI:37565"/>
    </ligand>
</feature>
<feature type="binding site" evidence="5">
    <location>
        <position position="143"/>
    </location>
    <ligand>
        <name>GTP</name>
        <dbReference type="ChEBI" id="CHEBI:37565"/>
    </ligand>
</feature>
<feature type="binding site" evidence="5">
    <location>
        <position position="144"/>
    </location>
    <ligand>
        <name>GTP</name>
        <dbReference type="ChEBI" id="CHEBI:37565"/>
    </ligand>
</feature>
<feature type="binding site" evidence="5">
    <location>
        <position position="204"/>
    </location>
    <ligand>
        <name>GTP</name>
        <dbReference type="ChEBI" id="CHEBI:37565"/>
    </ligand>
</feature>
<feature type="binding site" evidence="5">
    <location>
        <position position="226"/>
    </location>
    <ligand>
        <name>GTP</name>
        <dbReference type="ChEBI" id="CHEBI:37565"/>
    </ligand>
</feature>
<feature type="modified residue" description="Phosphothreonine" evidence="3">
    <location>
        <position position="55"/>
    </location>
</feature>
<feature type="modified residue" description="N6-acetyllysine" evidence="3">
    <location>
        <position position="58"/>
    </location>
</feature>
<feature type="modified residue" description="Phosphoserine; by CDK1" evidence="3">
    <location>
        <position position="172"/>
    </location>
</feature>
<feature type="modified residue" description="5-glutamyl polyglutamate" evidence="6">
    <location>
        <position position="438"/>
    </location>
</feature>
<feature type="strand" evidence="15">
    <location>
        <begin position="3"/>
        <end position="9"/>
    </location>
</feature>
<feature type="helix" evidence="15">
    <location>
        <begin position="10"/>
        <end position="27"/>
    </location>
</feature>
<feature type="strand" evidence="15">
    <location>
        <begin position="34"/>
        <end position="36"/>
    </location>
</feature>
<feature type="turn" evidence="15">
    <location>
        <begin position="45"/>
        <end position="50"/>
    </location>
</feature>
<feature type="strand" evidence="15">
    <location>
        <begin position="51"/>
        <end position="54"/>
    </location>
</feature>
<feature type="turn" evidence="15">
    <location>
        <begin position="55"/>
        <end position="57"/>
    </location>
</feature>
<feature type="strand" evidence="15">
    <location>
        <begin position="58"/>
        <end position="61"/>
    </location>
</feature>
<feature type="strand" evidence="15">
    <location>
        <begin position="63"/>
        <end position="69"/>
    </location>
</feature>
<feature type="helix" evidence="15">
    <location>
        <begin position="70"/>
        <end position="78"/>
    </location>
</feature>
<feature type="turn" evidence="15">
    <location>
        <begin position="80"/>
        <end position="83"/>
    </location>
</feature>
<feature type="helix" evidence="15">
    <location>
        <begin position="87"/>
        <end position="89"/>
    </location>
</feature>
<feature type="strand" evidence="15">
    <location>
        <begin position="90"/>
        <end position="92"/>
    </location>
</feature>
<feature type="helix" evidence="15">
    <location>
        <begin position="101"/>
        <end position="106"/>
    </location>
</feature>
<feature type="helix" evidence="15">
    <location>
        <begin position="109"/>
        <end position="126"/>
    </location>
</feature>
<feature type="strand" evidence="15">
    <location>
        <begin position="130"/>
        <end position="138"/>
    </location>
</feature>
<feature type="helix" evidence="15">
    <location>
        <begin position="143"/>
        <end position="158"/>
    </location>
</feature>
<feature type="strand" evidence="15">
    <location>
        <begin position="162"/>
        <end position="169"/>
    </location>
</feature>
<feature type="strand" evidence="15">
    <location>
        <begin position="173"/>
        <end position="175"/>
    </location>
</feature>
<feature type="helix" evidence="15">
    <location>
        <begin position="181"/>
        <end position="195"/>
    </location>
</feature>
<feature type="strand" evidence="15">
    <location>
        <begin position="197"/>
        <end position="202"/>
    </location>
</feature>
<feature type="helix" evidence="15">
    <location>
        <begin position="205"/>
        <end position="213"/>
    </location>
</feature>
<feature type="helix" evidence="15">
    <location>
        <begin position="222"/>
        <end position="237"/>
    </location>
</feature>
<feature type="helix" evidence="15">
    <location>
        <begin position="238"/>
        <end position="240"/>
    </location>
</feature>
<feature type="helix" evidence="15">
    <location>
        <begin position="250"/>
        <end position="257"/>
    </location>
</feature>
<feature type="strand" evidence="15">
    <location>
        <begin position="265"/>
        <end position="271"/>
    </location>
</feature>
<feature type="turn" evidence="15">
    <location>
        <begin position="278"/>
        <end position="281"/>
    </location>
</feature>
<feature type="helix" evidence="15">
    <location>
        <begin position="286"/>
        <end position="293"/>
    </location>
</feature>
<feature type="strand" evidence="15">
    <location>
        <begin position="299"/>
        <end position="302"/>
    </location>
</feature>
<feature type="helix" evidence="15">
    <location>
        <begin position="305"/>
        <end position="307"/>
    </location>
</feature>
<feature type="strand" evidence="15">
    <location>
        <begin position="310"/>
        <end position="320"/>
    </location>
</feature>
<feature type="helix" evidence="15">
    <location>
        <begin position="323"/>
        <end position="336"/>
    </location>
</feature>
<feature type="helix" evidence="15">
    <location>
        <begin position="338"/>
        <end position="340"/>
    </location>
</feature>
<feature type="strand" evidence="15">
    <location>
        <begin position="343"/>
        <end position="345"/>
    </location>
</feature>
<feature type="strand" evidence="15">
    <location>
        <begin position="349"/>
        <end position="353"/>
    </location>
</feature>
<feature type="strand" evidence="15">
    <location>
        <begin position="364"/>
        <end position="372"/>
    </location>
</feature>
<feature type="helix" evidence="15">
    <location>
        <begin position="374"/>
        <end position="390"/>
    </location>
</feature>
<feature type="turn" evidence="15">
    <location>
        <begin position="391"/>
        <end position="395"/>
    </location>
</feature>
<feature type="helix" evidence="15">
    <location>
        <begin position="396"/>
        <end position="399"/>
    </location>
</feature>
<feature type="turn" evidence="15">
    <location>
        <begin position="400"/>
        <end position="402"/>
    </location>
</feature>
<feature type="helix" evidence="15">
    <location>
        <begin position="405"/>
        <end position="424"/>
    </location>
</feature>